<accession>Q5R8B5</accession>
<dbReference type="EMBL" id="CR859838">
    <property type="protein sequence ID" value="CAH91995.1"/>
    <property type="molecule type" value="mRNA"/>
</dbReference>
<dbReference type="RefSeq" id="NP_001127493.1">
    <property type="nucleotide sequence ID" value="NM_001134021.1"/>
</dbReference>
<dbReference type="FunCoup" id="Q5R8B5">
    <property type="interactions" value="555"/>
</dbReference>
<dbReference type="STRING" id="9601.ENSPPYP00000020123"/>
<dbReference type="Ensembl" id="ENSPPYT00000020915.3">
    <property type="protein sequence ID" value="ENSPPYP00000020123.3"/>
    <property type="gene ID" value="ENSPPYG00000017944.3"/>
</dbReference>
<dbReference type="GeneID" id="100174568"/>
<dbReference type="KEGG" id="pon:100174568"/>
<dbReference type="CTD" id="23554"/>
<dbReference type="eggNOG" id="KOG3882">
    <property type="taxonomic scope" value="Eukaryota"/>
</dbReference>
<dbReference type="GeneTree" id="ENSGT00510000047764"/>
<dbReference type="InParanoid" id="Q5R8B5"/>
<dbReference type="OMA" id="CARHAHF"/>
<dbReference type="OrthoDB" id="8813994at2759"/>
<dbReference type="Proteomes" id="UP000001595">
    <property type="component" value="Chromosome 7"/>
</dbReference>
<dbReference type="GO" id="GO:0005886">
    <property type="term" value="C:plasma membrane"/>
    <property type="evidence" value="ECO:0000250"/>
    <property type="project" value="UniProtKB"/>
</dbReference>
<dbReference type="GO" id="GO:0001525">
    <property type="term" value="P:angiogenesis"/>
    <property type="evidence" value="ECO:0007669"/>
    <property type="project" value="UniProtKB-KW"/>
</dbReference>
<dbReference type="GO" id="GO:0007166">
    <property type="term" value="P:cell surface receptor signaling pathway"/>
    <property type="evidence" value="ECO:0000250"/>
    <property type="project" value="UniProtKB"/>
</dbReference>
<dbReference type="GO" id="GO:0035633">
    <property type="term" value="P:maintenance of blood-brain barrier"/>
    <property type="evidence" value="ECO:0007669"/>
    <property type="project" value="Ensembl"/>
</dbReference>
<dbReference type="GO" id="GO:0110135">
    <property type="term" value="P:Norrin signaling pathway"/>
    <property type="evidence" value="ECO:0007669"/>
    <property type="project" value="Ensembl"/>
</dbReference>
<dbReference type="GO" id="GO:0045765">
    <property type="term" value="P:regulation of angiogenesis"/>
    <property type="evidence" value="ECO:0000250"/>
    <property type="project" value="UniProtKB"/>
</dbReference>
<dbReference type="GO" id="GO:0010842">
    <property type="term" value="P:retina layer formation"/>
    <property type="evidence" value="ECO:0000250"/>
    <property type="project" value="UniProtKB"/>
</dbReference>
<dbReference type="CDD" id="cd03157">
    <property type="entry name" value="TM4SF12_like_LEL"/>
    <property type="match status" value="1"/>
</dbReference>
<dbReference type="FunFam" id="1.10.1450.10:FF:000009">
    <property type="entry name" value="Tetraspanin"/>
    <property type="match status" value="1"/>
</dbReference>
<dbReference type="Gene3D" id="1.10.1450.10">
    <property type="entry name" value="Tetraspanin"/>
    <property type="match status" value="1"/>
</dbReference>
<dbReference type="InterPro" id="IPR018499">
    <property type="entry name" value="Tetraspanin/Peripherin"/>
</dbReference>
<dbReference type="InterPro" id="IPR000301">
    <property type="entry name" value="Tetraspanin_animals"/>
</dbReference>
<dbReference type="InterPro" id="IPR018503">
    <property type="entry name" value="Tetraspanin_CS"/>
</dbReference>
<dbReference type="InterPro" id="IPR008952">
    <property type="entry name" value="Tetraspanin_EC2_sf"/>
</dbReference>
<dbReference type="PANTHER" id="PTHR19282">
    <property type="entry name" value="TETRASPANIN"/>
    <property type="match status" value="1"/>
</dbReference>
<dbReference type="PANTHER" id="PTHR19282:SF462">
    <property type="entry name" value="TETRASPANIN-12"/>
    <property type="match status" value="1"/>
</dbReference>
<dbReference type="Pfam" id="PF00335">
    <property type="entry name" value="Tetraspanin"/>
    <property type="match status" value="1"/>
</dbReference>
<dbReference type="PIRSF" id="PIRSF002419">
    <property type="entry name" value="Tetraspanin"/>
    <property type="match status" value="1"/>
</dbReference>
<dbReference type="PRINTS" id="PR00259">
    <property type="entry name" value="TMFOUR"/>
</dbReference>
<dbReference type="SUPFAM" id="SSF48652">
    <property type="entry name" value="Tetraspanin"/>
    <property type="match status" value="1"/>
</dbReference>
<dbReference type="PROSITE" id="PS00421">
    <property type="entry name" value="TM4_1"/>
    <property type="match status" value="1"/>
</dbReference>
<organism>
    <name type="scientific">Pongo abelii</name>
    <name type="common">Sumatran orangutan</name>
    <name type="synonym">Pongo pygmaeus abelii</name>
    <dbReference type="NCBI Taxonomy" id="9601"/>
    <lineage>
        <taxon>Eukaryota</taxon>
        <taxon>Metazoa</taxon>
        <taxon>Chordata</taxon>
        <taxon>Craniata</taxon>
        <taxon>Vertebrata</taxon>
        <taxon>Euteleostomi</taxon>
        <taxon>Mammalia</taxon>
        <taxon>Eutheria</taxon>
        <taxon>Euarchontoglires</taxon>
        <taxon>Primates</taxon>
        <taxon>Haplorrhini</taxon>
        <taxon>Catarrhini</taxon>
        <taxon>Hominidae</taxon>
        <taxon>Pongo</taxon>
    </lineage>
</organism>
<evidence type="ECO:0000250" key="1"/>
<evidence type="ECO:0000255" key="2"/>
<evidence type="ECO:0000305" key="3"/>
<comment type="function">
    <text evidence="1">Regulator of cell surface receptor signal transduction. Plays a central role in retinal vascularization by regulating norrin (NDP) signal transduction. Acts in concert with norrin (NDP) to promote FZD4 multimerization and subsequent activation of FZD4, leading to promote accumulation of beta-catenin (CTNNB1) and stimulate LEF/TCF-mediated transcriptional programs. Suprisingly, it only activates the norrin (NDP)-dependent activation of FZD4, while it does not activate the Wnt-dependent activation of FZD4, suggesting the existence of a Wnt-independent signaling that also promote accumulation the beta-catenin (CTNNB1). Acts as a regulator of membrane proteinases such as ADAM10 and MMP14/MT1-MMP. Activates ADAM10-dependent cleavage activity of amyloid precursor protein (APP). Activates MMP14/MT1-MMP-dependent cleavage activity (By similarity).</text>
</comment>
<comment type="subunit">
    <text evidence="1">Component of a complex, at least composed of TSPAN12, FZD4 and norrin (NDP) (By similarity). Interacts (when palmitoylated) with ADAM10. Interacts with MMP14/MT1-MMP (By similarity).</text>
</comment>
<comment type="subcellular location">
    <subcellularLocation>
        <location evidence="1">Cell membrane</location>
        <topology evidence="1">Multi-pass membrane protein</topology>
    </subcellularLocation>
</comment>
<comment type="PTM">
    <text evidence="1">Palmitoylated; required for interaction with ADAM10. The precise position of palmitoylated residues is unclear and occurs either on Cys-9, Cys-12 and/or Cys-83 (By similarity).</text>
</comment>
<comment type="similarity">
    <text evidence="3">Belongs to the tetraspanin (TM4SF) family.</text>
</comment>
<name>TSN12_PONAB</name>
<gene>
    <name type="primary">TSPAN12</name>
</gene>
<protein>
    <recommendedName>
        <fullName>Tetraspanin-12</fullName>
        <shortName>Tspan-12</shortName>
    </recommendedName>
</protein>
<proteinExistence type="evidence at transcript level"/>
<keyword id="KW-0037">Angiogenesis</keyword>
<keyword id="KW-1003">Cell membrane</keyword>
<keyword id="KW-0449">Lipoprotein</keyword>
<keyword id="KW-0472">Membrane</keyword>
<keyword id="KW-0564">Palmitate</keyword>
<keyword id="KW-1185">Reference proteome</keyword>
<keyword id="KW-0812">Transmembrane</keyword>
<keyword id="KW-1133">Transmembrane helix</keyword>
<reference key="1">
    <citation type="submission" date="2004-11" db="EMBL/GenBank/DDBJ databases">
        <authorList>
            <consortium name="The German cDNA consortium"/>
        </authorList>
    </citation>
    <scope>NUCLEOTIDE SEQUENCE [LARGE SCALE MRNA]</scope>
    <source>
        <tissue>Kidney</tissue>
    </source>
</reference>
<sequence>MAREDSVKCLRCLLYALNLLFWLMSISVLAVSAWMRDYLNNVLTLTAETRVEEAVILTYFPVVHPVMIAVCCFLIIVGMLGYCGTVKRNLLLLAWYFGSLLVIFCVELACGVWTYEQELMVPVQWSDMVTLKARMTNYGLPRYRWLTHAWNFFQREFKCCGVVYFTDWLEMTEMDWPPDSCCVREFPGCSKQAHQEDLSDLYQEGCGKKMYSFLRGTKQLQVLRFLGISIGVTQILAMILTITLLWALYYDRREPGTDQMMSLKNDNSQHLSCPSVELLKPSLSRIFEHTSMANSFNTHFEMEEL</sequence>
<feature type="chain" id="PRO_0000290010" description="Tetraspanin-12">
    <location>
        <begin position="1"/>
        <end position="305"/>
    </location>
</feature>
<feature type="topological domain" description="Cytoplasmic" evidence="2">
    <location>
        <begin position="1"/>
        <end position="12"/>
    </location>
</feature>
<feature type="transmembrane region" description="Helical" evidence="2">
    <location>
        <begin position="13"/>
        <end position="33"/>
    </location>
</feature>
<feature type="topological domain" description="Extracellular" evidence="2">
    <location>
        <begin position="34"/>
        <end position="59"/>
    </location>
</feature>
<feature type="transmembrane region" description="Helical" evidence="2">
    <location>
        <begin position="60"/>
        <end position="80"/>
    </location>
</feature>
<feature type="topological domain" description="Cytoplasmic" evidence="2">
    <location>
        <begin position="81"/>
        <end position="89"/>
    </location>
</feature>
<feature type="transmembrane region" description="Helical" evidence="2">
    <location>
        <begin position="90"/>
        <end position="110"/>
    </location>
</feature>
<feature type="topological domain" description="Extracellular" evidence="2">
    <location>
        <begin position="111"/>
        <end position="224"/>
    </location>
</feature>
<feature type="transmembrane region" description="Helical" evidence="2">
    <location>
        <begin position="225"/>
        <end position="245"/>
    </location>
</feature>
<feature type="topological domain" description="Cytoplasmic" evidence="2">
    <location>
        <begin position="246"/>
        <end position="305"/>
    </location>
</feature>
<feature type="lipid moiety-binding region" description="S-palmitoyl cysteine" evidence="1">
    <location>
        <position position="9"/>
    </location>
</feature>
<feature type="lipid moiety-binding region" description="S-palmitoyl cysteine" evidence="1">
    <location>
        <position position="12"/>
    </location>
</feature>
<feature type="lipid moiety-binding region" description="S-palmitoyl cysteine" evidence="1">
    <location>
        <position position="83"/>
    </location>
</feature>